<keyword id="KW-0010">Activator</keyword>
<keyword id="KW-0238">DNA-binding</keyword>
<keyword id="KW-0479">Metal-binding</keyword>
<keyword id="KW-0488">Methylation</keyword>
<keyword id="KW-0539">Nucleus</keyword>
<keyword id="KW-1185">Reference proteome</keyword>
<keyword id="KW-0677">Repeat</keyword>
<keyword id="KW-0804">Transcription</keyword>
<keyword id="KW-0805">Transcription regulation</keyword>
<keyword id="KW-0862">Zinc</keyword>
<keyword id="KW-0863">Zinc-finger</keyword>
<proteinExistence type="evidence at transcript level"/>
<comment type="function">
    <text evidence="2 3 4">Transcriptional activator that binds to the consensus sequence 5'-AGATAG-3' and plays a key role in cardiac development. In cooperation with TBX5, it binds to cardiac super-enhancers and promotes cardiomyocyte gene expression, while it down-regulates endocardial and endothelial gene expression. Involved in bone morphogenetic protein (BMP)-mediated induction of cardiac-specific gene expression. Binds to BMP response element (BMPRE) DNA sequences within cardiac activating regions. Acts as a transcriptional activator of ANF in cooperation with NKX2-5. Promotes cardiac myocyte enlargement. Required during testicular development. May play a role in sphingolipid signaling by regulating the expression of sphingosine-1-phosphate degrading enzyme, sphingosine-1-phosphate lyase.</text>
</comment>
<comment type="subunit">
    <text evidence="2 4">Interacts with ZNF260 (By similarity). Interacts with the homeobox domain of NKX2-5 through its C-terminal zinc finger. Also interacts with JARID2 which represses its ability to activate transcription of ANF. Interacts (via the second Zn finger) with NFATC4 (By similarity). Interacts with LMCD1 (By similarity). Forms a complex made of CDK9, CCNT1/cyclin-T1, EP300 and GATA4 that stimulates hypertrophy in cardiomyocytes. Interacts with NR5A1, ZFPM2 and TBX5. Interacts with TBX18. Interacts with PHF7; the interaction promotes GATA4 binding to its transcription targets (By similarity).</text>
</comment>
<comment type="subcellular location">
    <subcellularLocation>
        <location evidence="2">Nucleus</location>
    </subcellularLocation>
</comment>
<comment type="PTM">
    <text evidence="1">Methylation at Lys-300 attenuates transcriptional activity.</text>
</comment>
<gene>
    <name type="primary">GATA4</name>
</gene>
<feature type="chain" id="PRO_0000289588" description="Transcription factor GATA-4">
    <location>
        <begin position="1"/>
        <end position="442"/>
    </location>
</feature>
<feature type="zinc finger region" description="GATA-type 1" evidence="5">
    <location>
        <begin position="217"/>
        <end position="241"/>
    </location>
</feature>
<feature type="zinc finger region" description="GATA-type 2" evidence="5">
    <location>
        <begin position="271"/>
        <end position="295"/>
    </location>
</feature>
<feature type="region of interest" description="Disordered" evidence="6">
    <location>
        <begin position="62"/>
        <end position="107"/>
    </location>
</feature>
<feature type="region of interest" description="Disordered" evidence="6">
    <location>
        <begin position="315"/>
        <end position="379"/>
    </location>
</feature>
<feature type="region of interest" description="Disordered" evidence="6">
    <location>
        <begin position="408"/>
        <end position="442"/>
    </location>
</feature>
<feature type="compositionally biased region" description="Gly residues" evidence="6">
    <location>
        <begin position="62"/>
        <end position="73"/>
    </location>
</feature>
<feature type="compositionally biased region" description="Low complexity" evidence="6">
    <location>
        <begin position="74"/>
        <end position="94"/>
    </location>
</feature>
<feature type="compositionally biased region" description="Basic residues" evidence="6">
    <location>
        <begin position="317"/>
        <end position="326"/>
    </location>
</feature>
<feature type="compositionally biased region" description="Low complexity" evidence="6">
    <location>
        <begin position="331"/>
        <end position="358"/>
    </location>
</feature>
<feature type="compositionally biased region" description="Low complexity" evidence="6">
    <location>
        <begin position="412"/>
        <end position="424"/>
    </location>
</feature>
<feature type="modified residue" description="N6-methyllysine; by EZH2" evidence="4">
    <location>
        <position position="300"/>
    </location>
</feature>
<name>GATA4_CANLF</name>
<reference key="1">
    <citation type="submission" date="2006-06" db="EMBL/GenBank/DDBJ databases">
        <title>Molecular screening of GATA4 gene in canine atrial septal defects.</title>
        <authorList>
            <person name="Hyun C."/>
            <person name="Lee S.-A."/>
            <person name="Lee S.-G."/>
        </authorList>
    </citation>
    <scope>NUCLEOTIDE SEQUENCE [MRNA]</scope>
</reference>
<accession>Q0Q0E4</accession>
<organism>
    <name type="scientific">Canis lupus familiaris</name>
    <name type="common">Dog</name>
    <name type="synonym">Canis familiaris</name>
    <dbReference type="NCBI Taxonomy" id="9615"/>
    <lineage>
        <taxon>Eukaryota</taxon>
        <taxon>Metazoa</taxon>
        <taxon>Chordata</taxon>
        <taxon>Craniata</taxon>
        <taxon>Vertebrata</taxon>
        <taxon>Euteleostomi</taxon>
        <taxon>Mammalia</taxon>
        <taxon>Eutheria</taxon>
        <taxon>Laurasiatheria</taxon>
        <taxon>Carnivora</taxon>
        <taxon>Caniformia</taxon>
        <taxon>Canidae</taxon>
        <taxon>Canis</taxon>
    </lineage>
</organism>
<dbReference type="EMBL" id="DQ666280">
    <property type="protein sequence ID" value="ABG75570.1"/>
    <property type="molecule type" value="mRNA"/>
</dbReference>
<dbReference type="RefSeq" id="NP_001041577.1">
    <property type="nucleotide sequence ID" value="NM_001048112.1"/>
</dbReference>
<dbReference type="RefSeq" id="XP_005635679.1">
    <property type="nucleotide sequence ID" value="XM_005635622.2"/>
</dbReference>
<dbReference type="RefSeq" id="XP_013962935.1">
    <property type="nucleotide sequence ID" value="XM_014107460.1"/>
</dbReference>
<dbReference type="RefSeq" id="XP_013962936.1">
    <property type="nucleotide sequence ID" value="XM_014107461.1"/>
</dbReference>
<dbReference type="RefSeq" id="XP_013962937.1">
    <property type="nucleotide sequence ID" value="XM_014107462.1"/>
</dbReference>
<dbReference type="RefSeq" id="XP_013962938.1">
    <property type="nucleotide sequence ID" value="XM_014107463.1"/>
</dbReference>
<dbReference type="RefSeq" id="XP_038290496.1">
    <property type="nucleotide sequence ID" value="XM_038434568.1"/>
</dbReference>
<dbReference type="SMR" id="Q0Q0E4"/>
<dbReference type="FunCoup" id="Q0Q0E4">
    <property type="interactions" value="99"/>
</dbReference>
<dbReference type="STRING" id="9615.ENSCAFP00000038219"/>
<dbReference type="PaxDb" id="9612-ENSCAFP00000038219"/>
<dbReference type="Ensembl" id="ENSCAFT00000048684.3">
    <property type="protein sequence ID" value="ENSCAFP00000038219.1"/>
    <property type="gene ID" value="ENSCAFG00000029087.3"/>
</dbReference>
<dbReference type="Ensembl" id="ENSCAFT00030032771.1">
    <property type="protein sequence ID" value="ENSCAFP00030028589.1"/>
    <property type="gene ID" value="ENSCAFG00030017775.1"/>
</dbReference>
<dbReference type="Ensembl" id="ENSCAFT00845034032.1">
    <property type="protein sequence ID" value="ENSCAFP00845026636.1"/>
    <property type="gene ID" value="ENSCAFG00845019258.1"/>
</dbReference>
<dbReference type="GeneID" id="486079"/>
<dbReference type="KEGG" id="cfa:486079"/>
<dbReference type="CTD" id="2626"/>
<dbReference type="VEuPathDB" id="HostDB:ENSCAFG00845019258"/>
<dbReference type="VGNC" id="VGNC:54949">
    <property type="gene designation" value="GATA4"/>
</dbReference>
<dbReference type="eggNOG" id="KOG1601">
    <property type="taxonomic scope" value="Eukaryota"/>
</dbReference>
<dbReference type="GeneTree" id="ENSGT00940000158349"/>
<dbReference type="HOGENOM" id="CLU_027524_0_0_1"/>
<dbReference type="InParanoid" id="Q0Q0E4"/>
<dbReference type="OMA" id="MANHGPP"/>
<dbReference type="OrthoDB" id="515401at2759"/>
<dbReference type="TreeFam" id="TF315391"/>
<dbReference type="Reactome" id="R-CFA-983231">
    <property type="pathway name" value="Factors involved in megakaryocyte development and platelet production"/>
</dbReference>
<dbReference type="Proteomes" id="UP000002254">
    <property type="component" value="Chromosome 25"/>
</dbReference>
<dbReference type="Proteomes" id="UP000694429">
    <property type="component" value="Chromosome 25"/>
</dbReference>
<dbReference type="Proteomes" id="UP000694542">
    <property type="component" value="Unplaced"/>
</dbReference>
<dbReference type="Proteomes" id="UP000805418">
    <property type="component" value="Chromosome 25"/>
</dbReference>
<dbReference type="Bgee" id="ENSCAFG00000029087">
    <property type="expression patterns" value="Expressed in jejunum and 18 other cell types or tissues"/>
</dbReference>
<dbReference type="GO" id="GO:0016604">
    <property type="term" value="C:nuclear body"/>
    <property type="evidence" value="ECO:0007669"/>
    <property type="project" value="Ensembl"/>
</dbReference>
<dbReference type="GO" id="GO:0005634">
    <property type="term" value="C:nucleus"/>
    <property type="evidence" value="ECO:0000250"/>
    <property type="project" value="UniProtKB"/>
</dbReference>
<dbReference type="GO" id="GO:0090575">
    <property type="term" value="C:RNA polymerase II transcription regulator complex"/>
    <property type="evidence" value="ECO:0007669"/>
    <property type="project" value="Ensembl"/>
</dbReference>
<dbReference type="GO" id="GO:0070410">
    <property type="term" value="F:co-SMAD binding"/>
    <property type="evidence" value="ECO:0007669"/>
    <property type="project" value="Ensembl"/>
</dbReference>
<dbReference type="GO" id="GO:0003677">
    <property type="term" value="F:DNA binding"/>
    <property type="evidence" value="ECO:0000250"/>
    <property type="project" value="UniProtKB"/>
</dbReference>
<dbReference type="GO" id="GO:0001228">
    <property type="term" value="F:DNA-binding transcription activator activity, RNA polymerase II-specific"/>
    <property type="evidence" value="ECO:0007669"/>
    <property type="project" value="Ensembl"/>
</dbReference>
<dbReference type="GO" id="GO:0000981">
    <property type="term" value="F:DNA-binding transcription factor activity, RNA polymerase II-specific"/>
    <property type="evidence" value="ECO:0000318"/>
    <property type="project" value="GO_Central"/>
</dbReference>
<dbReference type="GO" id="GO:0000978">
    <property type="term" value="F:RNA polymerase II cis-regulatory region sequence-specific DNA binding"/>
    <property type="evidence" value="ECO:0000318"/>
    <property type="project" value="GO_Central"/>
</dbReference>
<dbReference type="GO" id="GO:0061629">
    <property type="term" value="F:RNA polymerase II-specific DNA-binding transcription factor binding"/>
    <property type="evidence" value="ECO:0007669"/>
    <property type="project" value="Ensembl"/>
</dbReference>
<dbReference type="GO" id="GO:0008270">
    <property type="term" value="F:zinc ion binding"/>
    <property type="evidence" value="ECO:0007669"/>
    <property type="project" value="UniProtKB-KW"/>
</dbReference>
<dbReference type="GO" id="GO:0003180">
    <property type="term" value="P:aortic valve morphogenesis"/>
    <property type="evidence" value="ECO:0007669"/>
    <property type="project" value="Ensembl"/>
</dbReference>
<dbReference type="GO" id="GO:0003290">
    <property type="term" value="P:atrial septum secundum morphogenesis"/>
    <property type="evidence" value="ECO:0007669"/>
    <property type="project" value="Ensembl"/>
</dbReference>
<dbReference type="GO" id="GO:0045165">
    <property type="term" value="P:cell fate commitment"/>
    <property type="evidence" value="ECO:0000318"/>
    <property type="project" value="GO_Central"/>
</dbReference>
<dbReference type="GO" id="GO:0003197">
    <property type="term" value="P:endocardial cushion development"/>
    <property type="evidence" value="ECO:0007669"/>
    <property type="project" value="Ensembl"/>
</dbReference>
<dbReference type="GO" id="GO:0060575">
    <property type="term" value="P:intestinal epithelial cell differentiation"/>
    <property type="evidence" value="ECO:0007669"/>
    <property type="project" value="Ensembl"/>
</dbReference>
<dbReference type="GO" id="GO:0008584">
    <property type="term" value="P:male gonad development"/>
    <property type="evidence" value="ECO:0007669"/>
    <property type="project" value="Ensembl"/>
</dbReference>
<dbReference type="GO" id="GO:0000122">
    <property type="term" value="P:negative regulation of transcription by RNA polymerase II"/>
    <property type="evidence" value="ECO:0000318"/>
    <property type="project" value="GO_Central"/>
</dbReference>
<dbReference type="GO" id="GO:0045893">
    <property type="term" value="P:positive regulation of DNA-templated transcription"/>
    <property type="evidence" value="ECO:0000250"/>
    <property type="project" value="UniProtKB"/>
</dbReference>
<dbReference type="GO" id="GO:0045944">
    <property type="term" value="P:positive regulation of transcription by RNA polymerase II"/>
    <property type="evidence" value="ECO:0000318"/>
    <property type="project" value="GO_Central"/>
</dbReference>
<dbReference type="GO" id="GO:0009410">
    <property type="term" value="P:response to xenobiotic stimulus"/>
    <property type="evidence" value="ECO:0007669"/>
    <property type="project" value="Ensembl"/>
</dbReference>
<dbReference type="CDD" id="cd00202">
    <property type="entry name" value="ZnF_GATA"/>
    <property type="match status" value="2"/>
</dbReference>
<dbReference type="FunFam" id="3.30.50.10:FF:000001">
    <property type="entry name" value="GATA transcription factor (GATAd)"/>
    <property type="match status" value="1"/>
</dbReference>
<dbReference type="FunFam" id="3.30.50.10:FF:000032">
    <property type="entry name" value="Transcription factor GATA-3"/>
    <property type="match status" value="1"/>
</dbReference>
<dbReference type="Gene3D" id="3.30.50.10">
    <property type="entry name" value="Erythroid Transcription Factor GATA-1, subunit A"/>
    <property type="match status" value="2"/>
</dbReference>
<dbReference type="InterPro" id="IPR008013">
    <property type="entry name" value="GATA_N"/>
</dbReference>
<dbReference type="InterPro" id="IPR016375">
    <property type="entry name" value="TF_GATA_4/5/6"/>
</dbReference>
<dbReference type="InterPro" id="IPR039355">
    <property type="entry name" value="Transcription_factor_GATA"/>
</dbReference>
<dbReference type="InterPro" id="IPR000679">
    <property type="entry name" value="Znf_GATA"/>
</dbReference>
<dbReference type="InterPro" id="IPR013088">
    <property type="entry name" value="Znf_NHR/GATA"/>
</dbReference>
<dbReference type="PANTHER" id="PTHR10071">
    <property type="entry name" value="TRANSCRIPTION FACTOR GATA FAMILY MEMBER"/>
    <property type="match status" value="1"/>
</dbReference>
<dbReference type="PANTHER" id="PTHR10071:SF154">
    <property type="entry name" value="TRANSCRIPTION FACTOR GATA-4"/>
    <property type="match status" value="1"/>
</dbReference>
<dbReference type="Pfam" id="PF00320">
    <property type="entry name" value="GATA"/>
    <property type="match status" value="2"/>
</dbReference>
<dbReference type="Pfam" id="PF05349">
    <property type="entry name" value="GATA-N"/>
    <property type="match status" value="1"/>
</dbReference>
<dbReference type="PIRSF" id="PIRSF003028">
    <property type="entry name" value="TF_GATA_4/5/6"/>
    <property type="match status" value="1"/>
</dbReference>
<dbReference type="PRINTS" id="PR00619">
    <property type="entry name" value="GATAZNFINGER"/>
</dbReference>
<dbReference type="SMART" id="SM00401">
    <property type="entry name" value="ZnF_GATA"/>
    <property type="match status" value="2"/>
</dbReference>
<dbReference type="SUPFAM" id="SSF57716">
    <property type="entry name" value="Glucocorticoid receptor-like (DNA-binding domain)"/>
    <property type="match status" value="2"/>
</dbReference>
<dbReference type="PROSITE" id="PS00344">
    <property type="entry name" value="GATA_ZN_FINGER_1"/>
    <property type="match status" value="2"/>
</dbReference>
<dbReference type="PROSITE" id="PS50114">
    <property type="entry name" value="GATA_ZN_FINGER_2"/>
    <property type="match status" value="2"/>
</dbReference>
<evidence type="ECO:0000250" key="1"/>
<evidence type="ECO:0000250" key="2">
    <source>
        <dbReference type="UniProtKB" id="P43694"/>
    </source>
</evidence>
<evidence type="ECO:0000250" key="3">
    <source>
        <dbReference type="UniProtKB" id="P46152"/>
    </source>
</evidence>
<evidence type="ECO:0000250" key="4">
    <source>
        <dbReference type="UniProtKB" id="Q08369"/>
    </source>
</evidence>
<evidence type="ECO:0000255" key="5">
    <source>
        <dbReference type="PROSITE-ProRule" id="PRU00094"/>
    </source>
</evidence>
<evidence type="ECO:0000256" key="6">
    <source>
        <dbReference type="SAM" id="MobiDB-lite"/>
    </source>
</evidence>
<sequence>MYQSLAMAANHGPPPGAYEAGGPGAFMHGAGAASSPVYVPTPRVPSSVLGLSYLQGGGGAAASGASSGGGSGGAPSAAGPGAQQGSPGWSQAGADGAAYTPPPVSPRFSFPGTTGSLAAAAAAAAAREAAAYGGGGGAAGAGLAGREQYGRAGFAGSYSSPYPAYMADVGASWAAAAAASAGPFDSPVLHSLPGRANPAARHPNLDMFDDFSEGRECVNCGAMSTPLWRRDGTGHYLCNACGLYHKMNGINRPLIKPQRRLSASRRVGLSCANCQTTTTTLWRRNAEGEPVCNACGLYMKLHGVPRPLAMRKEGIQTRKRKPKNLNKSKTPAGPSGGESLPPASSASSNSSNVATSSSEEMRPIKTEPGLSSHYGHSSSMSQTFSVSAMSGHGPSIHPVLSALKLSPQGYTSSVSQSPQASSKQDPWNSLALADSHGDIITA</sequence>
<protein>
    <recommendedName>
        <fullName>Transcription factor GATA-4</fullName>
    </recommendedName>
    <alternativeName>
        <fullName>GATA-binding factor 4</fullName>
    </alternativeName>
</protein>